<gene>
    <name evidence="1" type="primary">pyrE</name>
    <name type="ordered locus">BF0510</name>
</gene>
<evidence type="ECO:0000255" key="1">
    <source>
        <dbReference type="HAMAP-Rule" id="MF_01208"/>
    </source>
</evidence>
<protein>
    <recommendedName>
        <fullName evidence="1">Orotate phosphoribosyltransferase</fullName>
        <shortName evidence="1">OPRT</shortName>
        <shortName evidence="1">OPRTase</shortName>
        <ecNumber evidence="1">2.4.2.10</ecNumber>
    </recommendedName>
</protein>
<accession>Q64Z17</accession>
<dbReference type="EC" id="2.4.2.10" evidence="1"/>
<dbReference type="EMBL" id="AP006841">
    <property type="protein sequence ID" value="BAD47259.1"/>
    <property type="molecule type" value="Genomic_DNA"/>
</dbReference>
<dbReference type="RefSeq" id="WP_005784381.1">
    <property type="nucleotide sequence ID" value="NZ_UYXF01000019.1"/>
</dbReference>
<dbReference type="RefSeq" id="YP_097793.1">
    <property type="nucleotide sequence ID" value="NC_006347.1"/>
</dbReference>
<dbReference type="SMR" id="Q64Z17"/>
<dbReference type="STRING" id="295405.BF0510"/>
<dbReference type="GeneID" id="60366093"/>
<dbReference type="KEGG" id="bfr:BF0510"/>
<dbReference type="PATRIC" id="fig|295405.11.peg.526"/>
<dbReference type="HOGENOM" id="CLU_074878_1_1_10"/>
<dbReference type="OrthoDB" id="9802134at2"/>
<dbReference type="UniPathway" id="UPA00070">
    <property type="reaction ID" value="UER00119"/>
</dbReference>
<dbReference type="Proteomes" id="UP000002197">
    <property type="component" value="Chromosome"/>
</dbReference>
<dbReference type="GO" id="GO:0000287">
    <property type="term" value="F:magnesium ion binding"/>
    <property type="evidence" value="ECO:0007669"/>
    <property type="project" value="UniProtKB-UniRule"/>
</dbReference>
<dbReference type="GO" id="GO:0004588">
    <property type="term" value="F:orotate phosphoribosyltransferase activity"/>
    <property type="evidence" value="ECO:0007669"/>
    <property type="project" value="UniProtKB-UniRule"/>
</dbReference>
<dbReference type="GO" id="GO:0044205">
    <property type="term" value="P:'de novo' UMP biosynthetic process"/>
    <property type="evidence" value="ECO:0007669"/>
    <property type="project" value="UniProtKB-UniRule"/>
</dbReference>
<dbReference type="GO" id="GO:0019856">
    <property type="term" value="P:pyrimidine nucleobase biosynthetic process"/>
    <property type="evidence" value="ECO:0007669"/>
    <property type="project" value="TreeGrafter"/>
</dbReference>
<dbReference type="CDD" id="cd06223">
    <property type="entry name" value="PRTases_typeI"/>
    <property type="match status" value="1"/>
</dbReference>
<dbReference type="Gene3D" id="3.40.50.2020">
    <property type="match status" value="1"/>
</dbReference>
<dbReference type="HAMAP" id="MF_01208">
    <property type="entry name" value="PyrE"/>
    <property type="match status" value="1"/>
</dbReference>
<dbReference type="InterPro" id="IPR023031">
    <property type="entry name" value="OPRT"/>
</dbReference>
<dbReference type="InterPro" id="IPR004467">
    <property type="entry name" value="Or_phspho_trans_dom"/>
</dbReference>
<dbReference type="InterPro" id="IPR000836">
    <property type="entry name" value="PRibTrfase_dom"/>
</dbReference>
<dbReference type="InterPro" id="IPR029057">
    <property type="entry name" value="PRTase-like"/>
</dbReference>
<dbReference type="NCBIfam" id="TIGR00336">
    <property type="entry name" value="pyrE"/>
    <property type="match status" value="1"/>
</dbReference>
<dbReference type="PANTHER" id="PTHR19278">
    <property type="entry name" value="OROTATE PHOSPHORIBOSYLTRANSFERASE"/>
    <property type="match status" value="1"/>
</dbReference>
<dbReference type="PANTHER" id="PTHR19278:SF9">
    <property type="entry name" value="URIDINE 5'-MONOPHOSPHATE SYNTHASE"/>
    <property type="match status" value="1"/>
</dbReference>
<dbReference type="Pfam" id="PF00156">
    <property type="entry name" value="Pribosyltran"/>
    <property type="match status" value="1"/>
</dbReference>
<dbReference type="SUPFAM" id="SSF53271">
    <property type="entry name" value="PRTase-like"/>
    <property type="match status" value="1"/>
</dbReference>
<dbReference type="PROSITE" id="PS00103">
    <property type="entry name" value="PUR_PYR_PR_TRANSFER"/>
    <property type="match status" value="1"/>
</dbReference>
<reference key="1">
    <citation type="journal article" date="2004" name="Proc. Natl. Acad. Sci. U.S.A.">
        <title>Genomic analysis of Bacteroides fragilis reveals extensive DNA inversions regulating cell surface adaptation.</title>
        <authorList>
            <person name="Kuwahara T."/>
            <person name="Yamashita A."/>
            <person name="Hirakawa H."/>
            <person name="Nakayama H."/>
            <person name="Toh H."/>
            <person name="Okada N."/>
            <person name="Kuhara S."/>
            <person name="Hattori M."/>
            <person name="Hayashi T."/>
            <person name="Ohnishi Y."/>
        </authorList>
    </citation>
    <scope>NUCLEOTIDE SEQUENCE [LARGE SCALE GENOMIC DNA]</scope>
    <source>
        <strain>YCH46</strain>
    </source>
</reference>
<sequence length="212" mass="23504">MKNLERLFAEKLLKIKAIKLQPANPFTWASGWKSPFYCDNRKTLSYPSLRSFVKFEITRLVLERFGQVDAIAGVATGAIPQGALVADALNLPFVYVRSTPKDHGLENLIEGELRPGMKVVVVEDLISTGGSSLKAVEAIRRDGCEVIGMVAAYTYGFPVAEQAFKDAKVPLVTLTNYEAVLDVALRTGYIEEEDIATLNEWRKDPAHWETGK</sequence>
<proteinExistence type="inferred from homology"/>
<comment type="function">
    <text evidence="1">Catalyzes the transfer of a ribosyl phosphate group from 5-phosphoribose 1-diphosphate to orotate, leading to the formation of orotidine monophosphate (OMP).</text>
</comment>
<comment type="catalytic activity">
    <reaction evidence="1">
        <text>orotidine 5'-phosphate + diphosphate = orotate + 5-phospho-alpha-D-ribose 1-diphosphate</text>
        <dbReference type="Rhea" id="RHEA:10380"/>
        <dbReference type="ChEBI" id="CHEBI:30839"/>
        <dbReference type="ChEBI" id="CHEBI:33019"/>
        <dbReference type="ChEBI" id="CHEBI:57538"/>
        <dbReference type="ChEBI" id="CHEBI:58017"/>
        <dbReference type="EC" id="2.4.2.10"/>
    </reaction>
</comment>
<comment type="cofactor">
    <cofactor evidence="1">
        <name>Mg(2+)</name>
        <dbReference type="ChEBI" id="CHEBI:18420"/>
    </cofactor>
</comment>
<comment type="pathway">
    <text evidence="1">Pyrimidine metabolism; UMP biosynthesis via de novo pathway; UMP from orotate: step 1/2.</text>
</comment>
<comment type="subunit">
    <text evidence="1">Homodimer.</text>
</comment>
<comment type="similarity">
    <text evidence="1">Belongs to the purine/pyrimidine phosphoribosyltransferase family. PyrE subfamily.</text>
</comment>
<organism>
    <name type="scientific">Bacteroides fragilis (strain YCH46)</name>
    <dbReference type="NCBI Taxonomy" id="295405"/>
    <lineage>
        <taxon>Bacteria</taxon>
        <taxon>Pseudomonadati</taxon>
        <taxon>Bacteroidota</taxon>
        <taxon>Bacteroidia</taxon>
        <taxon>Bacteroidales</taxon>
        <taxon>Bacteroidaceae</taxon>
        <taxon>Bacteroides</taxon>
    </lineage>
</organism>
<feature type="chain" id="PRO_0000110669" description="Orotate phosphoribosyltransferase">
    <location>
        <begin position="1"/>
        <end position="212"/>
    </location>
</feature>
<feature type="binding site" evidence="1">
    <location>
        <position position="97"/>
    </location>
    <ligand>
        <name>5-phospho-alpha-D-ribose 1-diphosphate</name>
        <dbReference type="ChEBI" id="CHEBI:58017"/>
        <note>ligand shared between dimeric partners</note>
    </ligand>
</feature>
<feature type="binding site" evidence="1">
    <location>
        <position position="101"/>
    </location>
    <ligand>
        <name>5-phospho-alpha-D-ribose 1-diphosphate</name>
        <dbReference type="ChEBI" id="CHEBI:58017"/>
        <note>ligand shared between dimeric partners</note>
    </ligand>
</feature>
<feature type="binding site" evidence="1">
    <location>
        <position position="103"/>
    </location>
    <ligand>
        <name>5-phospho-alpha-D-ribose 1-diphosphate</name>
        <dbReference type="ChEBI" id="CHEBI:58017"/>
        <note>ligand shared between dimeric partners</note>
    </ligand>
</feature>
<feature type="binding site" description="in other chain" evidence="1">
    <location>
        <begin position="123"/>
        <end position="131"/>
    </location>
    <ligand>
        <name>5-phospho-alpha-D-ribose 1-diphosphate</name>
        <dbReference type="ChEBI" id="CHEBI:58017"/>
        <note>ligand shared between dimeric partners</note>
    </ligand>
</feature>
<feature type="binding site" evidence="1">
    <location>
        <position position="127"/>
    </location>
    <ligand>
        <name>orotate</name>
        <dbReference type="ChEBI" id="CHEBI:30839"/>
    </ligand>
</feature>
<name>PYRE_BACFR</name>
<keyword id="KW-0328">Glycosyltransferase</keyword>
<keyword id="KW-0460">Magnesium</keyword>
<keyword id="KW-0665">Pyrimidine biosynthesis</keyword>
<keyword id="KW-0808">Transferase</keyword>